<evidence type="ECO:0000255" key="1">
    <source>
        <dbReference type="HAMAP-Rule" id="MF_00567"/>
    </source>
</evidence>
<sequence length="353" mass="38593">MSEIFDVNAAIYPFPARPVPLDTNEKAFYREKIKTLLKQRDAVLVAHYYTDPEIQALAEETGGCVADSLEMARFGNNHPASTLLVAGVRFMGETAKILNPEKKVLMPTLNAECSLDLGCPVDEFTAFCDSHPDRTVVVYANTSAAVKAKADWVVTSSIAVELIEHLDSLGEKIIWAPDRHLGSYVQKKSGADVLCWQGACIVHDEFKTQALARMKALYPDAAVLVHPESPQAVVDMADAVGSTSQLIQAAKTLPQKTLIVATDRGIFYKMQQACPDKELFEAPTAGEGATCRSCAHCPWMAMNGLRAIAEGLEQGGVMHEIHVDEELRQQALIPLNRMLDFANQLKLQVKGNA</sequence>
<comment type="function">
    <text evidence="1">Catalyzes the condensation of iminoaspartate with dihydroxyacetone phosphate to form quinolinate.</text>
</comment>
<comment type="catalytic activity">
    <reaction evidence="1">
        <text>iminosuccinate + dihydroxyacetone phosphate = quinolinate + phosphate + 2 H2O + H(+)</text>
        <dbReference type="Rhea" id="RHEA:25888"/>
        <dbReference type="ChEBI" id="CHEBI:15377"/>
        <dbReference type="ChEBI" id="CHEBI:15378"/>
        <dbReference type="ChEBI" id="CHEBI:29959"/>
        <dbReference type="ChEBI" id="CHEBI:43474"/>
        <dbReference type="ChEBI" id="CHEBI:57642"/>
        <dbReference type="ChEBI" id="CHEBI:77875"/>
        <dbReference type="EC" id="2.5.1.72"/>
    </reaction>
    <physiologicalReaction direction="left-to-right" evidence="1">
        <dbReference type="Rhea" id="RHEA:25889"/>
    </physiologicalReaction>
</comment>
<comment type="cofactor">
    <cofactor evidence="1">
        <name>[4Fe-4S] cluster</name>
        <dbReference type="ChEBI" id="CHEBI:49883"/>
    </cofactor>
    <text evidence="1">Binds 1 [4Fe-4S] cluster per subunit.</text>
</comment>
<comment type="pathway">
    <text evidence="1">Cofactor biosynthesis; NAD(+) biosynthesis; quinolinate from iminoaspartate: step 1/1.</text>
</comment>
<comment type="subcellular location">
    <subcellularLocation>
        <location evidence="1">Cytoplasm</location>
    </subcellularLocation>
</comment>
<comment type="similarity">
    <text evidence="1">Belongs to the quinolinate synthase family. Type 1 subfamily.</text>
</comment>
<proteinExistence type="inferred from homology"/>
<reference key="1">
    <citation type="journal article" date="2006" name="J. Bacteriol.">
        <title>Complete genome sequence of Yersinia pestis strains Antiqua and Nepal516: evidence of gene reduction in an emerging pathogen.</title>
        <authorList>
            <person name="Chain P.S.G."/>
            <person name="Hu P."/>
            <person name="Malfatti S.A."/>
            <person name="Radnedge L."/>
            <person name="Larimer F."/>
            <person name="Vergez L.M."/>
            <person name="Worsham P."/>
            <person name="Chu M.C."/>
            <person name="Andersen G.L."/>
        </authorList>
    </citation>
    <scope>NUCLEOTIDE SEQUENCE [LARGE SCALE GENOMIC DNA]</scope>
    <source>
        <strain>Antiqua</strain>
    </source>
</reference>
<gene>
    <name evidence="1" type="primary">nadA</name>
    <name type="ordered locus">YPA_0605</name>
</gene>
<dbReference type="EC" id="2.5.1.72" evidence="1"/>
<dbReference type="EMBL" id="CP000308">
    <property type="protein sequence ID" value="ABG12573.1"/>
    <property type="molecule type" value="Genomic_DNA"/>
</dbReference>
<dbReference type="RefSeq" id="WP_002210741.1">
    <property type="nucleotide sequence ID" value="NZ_CP009906.1"/>
</dbReference>
<dbReference type="SMR" id="Q1CAE9"/>
<dbReference type="GeneID" id="57977266"/>
<dbReference type="KEGG" id="ypa:YPA_0605"/>
<dbReference type="UniPathway" id="UPA00253">
    <property type="reaction ID" value="UER00327"/>
</dbReference>
<dbReference type="Proteomes" id="UP000001971">
    <property type="component" value="Chromosome"/>
</dbReference>
<dbReference type="GO" id="GO:0005829">
    <property type="term" value="C:cytosol"/>
    <property type="evidence" value="ECO:0007669"/>
    <property type="project" value="TreeGrafter"/>
</dbReference>
<dbReference type="GO" id="GO:0051539">
    <property type="term" value="F:4 iron, 4 sulfur cluster binding"/>
    <property type="evidence" value="ECO:0007669"/>
    <property type="project" value="UniProtKB-KW"/>
</dbReference>
<dbReference type="GO" id="GO:0046872">
    <property type="term" value="F:metal ion binding"/>
    <property type="evidence" value="ECO:0007669"/>
    <property type="project" value="UniProtKB-KW"/>
</dbReference>
<dbReference type="GO" id="GO:0008987">
    <property type="term" value="F:quinolinate synthetase A activity"/>
    <property type="evidence" value="ECO:0007669"/>
    <property type="project" value="UniProtKB-UniRule"/>
</dbReference>
<dbReference type="GO" id="GO:0034628">
    <property type="term" value="P:'de novo' NAD biosynthetic process from L-aspartate"/>
    <property type="evidence" value="ECO:0007669"/>
    <property type="project" value="TreeGrafter"/>
</dbReference>
<dbReference type="FunFam" id="3.40.50.10800:FF:000003">
    <property type="entry name" value="Quinolinate synthase A"/>
    <property type="match status" value="1"/>
</dbReference>
<dbReference type="Gene3D" id="3.40.50.10800">
    <property type="entry name" value="NadA-like"/>
    <property type="match status" value="3"/>
</dbReference>
<dbReference type="HAMAP" id="MF_00567">
    <property type="entry name" value="NadA_type1"/>
    <property type="match status" value="1"/>
</dbReference>
<dbReference type="InterPro" id="IPR003473">
    <property type="entry name" value="NadA"/>
</dbReference>
<dbReference type="InterPro" id="IPR036094">
    <property type="entry name" value="NadA_sf"/>
</dbReference>
<dbReference type="InterPro" id="IPR023513">
    <property type="entry name" value="Quinolinate_synth_A_type1"/>
</dbReference>
<dbReference type="NCBIfam" id="TIGR00550">
    <property type="entry name" value="nadA"/>
    <property type="match status" value="1"/>
</dbReference>
<dbReference type="NCBIfam" id="NF006877">
    <property type="entry name" value="PRK09375.1-1"/>
    <property type="match status" value="1"/>
</dbReference>
<dbReference type="NCBIfam" id="NF006878">
    <property type="entry name" value="PRK09375.1-2"/>
    <property type="match status" value="1"/>
</dbReference>
<dbReference type="PANTHER" id="PTHR30573:SF0">
    <property type="entry name" value="QUINOLINATE SYNTHASE, CHLOROPLASTIC"/>
    <property type="match status" value="1"/>
</dbReference>
<dbReference type="PANTHER" id="PTHR30573">
    <property type="entry name" value="QUINOLINATE SYNTHETASE A"/>
    <property type="match status" value="1"/>
</dbReference>
<dbReference type="Pfam" id="PF02445">
    <property type="entry name" value="NadA"/>
    <property type="match status" value="1"/>
</dbReference>
<dbReference type="SUPFAM" id="SSF142754">
    <property type="entry name" value="NadA-like"/>
    <property type="match status" value="1"/>
</dbReference>
<keyword id="KW-0004">4Fe-4S</keyword>
<keyword id="KW-0963">Cytoplasm</keyword>
<keyword id="KW-0408">Iron</keyword>
<keyword id="KW-0411">Iron-sulfur</keyword>
<keyword id="KW-0479">Metal-binding</keyword>
<keyword id="KW-0662">Pyridine nucleotide biosynthesis</keyword>
<keyword id="KW-0808">Transferase</keyword>
<organism>
    <name type="scientific">Yersinia pestis bv. Antiqua (strain Antiqua)</name>
    <dbReference type="NCBI Taxonomy" id="360102"/>
    <lineage>
        <taxon>Bacteria</taxon>
        <taxon>Pseudomonadati</taxon>
        <taxon>Pseudomonadota</taxon>
        <taxon>Gammaproteobacteria</taxon>
        <taxon>Enterobacterales</taxon>
        <taxon>Yersiniaceae</taxon>
        <taxon>Yersinia</taxon>
    </lineage>
</organism>
<name>NADA_YERPA</name>
<accession>Q1CAE9</accession>
<protein>
    <recommendedName>
        <fullName evidence="1">Quinolinate synthase</fullName>
        <ecNumber evidence="1">2.5.1.72</ecNumber>
    </recommendedName>
</protein>
<feature type="chain" id="PRO_1000024978" description="Quinolinate synthase">
    <location>
        <begin position="1"/>
        <end position="353"/>
    </location>
</feature>
<feature type="binding site" evidence="1">
    <location>
        <position position="47"/>
    </location>
    <ligand>
        <name>iminosuccinate</name>
        <dbReference type="ChEBI" id="CHEBI:77875"/>
    </ligand>
</feature>
<feature type="binding site" evidence="1">
    <location>
        <position position="68"/>
    </location>
    <ligand>
        <name>iminosuccinate</name>
        <dbReference type="ChEBI" id="CHEBI:77875"/>
    </ligand>
</feature>
<feature type="binding site" evidence="1">
    <location>
        <position position="113"/>
    </location>
    <ligand>
        <name>[4Fe-4S] cluster</name>
        <dbReference type="ChEBI" id="CHEBI:49883"/>
    </ligand>
</feature>
<feature type="binding site" evidence="1">
    <location>
        <begin position="139"/>
        <end position="141"/>
    </location>
    <ligand>
        <name>iminosuccinate</name>
        <dbReference type="ChEBI" id="CHEBI:77875"/>
    </ligand>
</feature>
<feature type="binding site" evidence="1">
    <location>
        <position position="156"/>
    </location>
    <ligand>
        <name>iminosuccinate</name>
        <dbReference type="ChEBI" id="CHEBI:77875"/>
    </ligand>
</feature>
<feature type="binding site" evidence="1">
    <location>
        <position position="200"/>
    </location>
    <ligand>
        <name>[4Fe-4S] cluster</name>
        <dbReference type="ChEBI" id="CHEBI:49883"/>
    </ligand>
</feature>
<feature type="binding site" evidence="1">
    <location>
        <begin position="226"/>
        <end position="228"/>
    </location>
    <ligand>
        <name>iminosuccinate</name>
        <dbReference type="ChEBI" id="CHEBI:77875"/>
    </ligand>
</feature>
<feature type="binding site" evidence="1">
    <location>
        <position position="243"/>
    </location>
    <ligand>
        <name>iminosuccinate</name>
        <dbReference type="ChEBI" id="CHEBI:77875"/>
    </ligand>
</feature>
<feature type="binding site" evidence="1">
    <location>
        <position position="297"/>
    </location>
    <ligand>
        <name>[4Fe-4S] cluster</name>
        <dbReference type="ChEBI" id="CHEBI:49883"/>
    </ligand>
</feature>